<organism>
    <name type="scientific">Rickettsia akari (strain Hartford)</name>
    <dbReference type="NCBI Taxonomy" id="293614"/>
    <lineage>
        <taxon>Bacteria</taxon>
        <taxon>Pseudomonadati</taxon>
        <taxon>Pseudomonadota</taxon>
        <taxon>Alphaproteobacteria</taxon>
        <taxon>Rickettsiales</taxon>
        <taxon>Rickettsiaceae</taxon>
        <taxon>Rickettsieae</taxon>
        <taxon>Rickettsia</taxon>
        <taxon>spotted fever group</taxon>
    </lineage>
</organism>
<proteinExistence type="inferred from homology"/>
<sequence length="166" mass="19550">MQNYFQLLGLPQDYDIDLKILEKQYFAMQVKYHPDKAKTLQEKEHNLITAAELNNAYSTLKNALKRAEYMLLLQNINLNDEKTRSVLSPLELSIFWNEMEIIENTTLFSDLEKIKDKYELMQKQEIDSLKQAFKEQNLSDATIKTSKLKYIGTLLHKLQKKIKSCK</sequence>
<dbReference type="EMBL" id="CP000847">
    <property type="protein sequence ID" value="ABV74614.1"/>
    <property type="molecule type" value="Genomic_DNA"/>
</dbReference>
<dbReference type="RefSeq" id="WP_012149248.1">
    <property type="nucleotide sequence ID" value="NC_009881.1"/>
</dbReference>
<dbReference type="SMR" id="A8GMI9"/>
<dbReference type="STRING" id="293614.A1C_01480"/>
<dbReference type="KEGG" id="rak:A1C_01480"/>
<dbReference type="eggNOG" id="COG0484">
    <property type="taxonomic scope" value="Bacteria"/>
</dbReference>
<dbReference type="HOGENOM" id="CLU_068529_2_0_5"/>
<dbReference type="Proteomes" id="UP000006830">
    <property type="component" value="Chromosome"/>
</dbReference>
<dbReference type="GO" id="GO:0001671">
    <property type="term" value="F:ATPase activator activity"/>
    <property type="evidence" value="ECO:0007669"/>
    <property type="project" value="InterPro"/>
</dbReference>
<dbReference type="GO" id="GO:0051087">
    <property type="term" value="F:protein-folding chaperone binding"/>
    <property type="evidence" value="ECO:0007669"/>
    <property type="project" value="InterPro"/>
</dbReference>
<dbReference type="GO" id="GO:0044571">
    <property type="term" value="P:[2Fe-2S] cluster assembly"/>
    <property type="evidence" value="ECO:0007669"/>
    <property type="project" value="InterPro"/>
</dbReference>
<dbReference type="GO" id="GO:0051259">
    <property type="term" value="P:protein complex oligomerization"/>
    <property type="evidence" value="ECO:0007669"/>
    <property type="project" value="InterPro"/>
</dbReference>
<dbReference type="GO" id="GO:0006457">
    <property type="term" value="P:protein folding"/>
    <property type="evidence" value="ECO:0007669"/>
    <property type="project" value="UniProtKB-UniRule"/>
</dbReference>
<dbReference type="CDD" id="cd06257">
    <property type="entry name" value="DnaJ"/>
    <property type="match status" value="1"/>
</dbReference>
<dbReference type="Gene3D" id="1.10.287.110">
    <property type="entry name" value="DnaJ domain"/>
    <property type="match status" value="1"/>
</dbReference>
<dbReference type="Gene3D" id="1.20.1280.20">
    <property type="entry name" value="HscB, C-terminal domain"/>
    <property type="match status" value="1"/>
</dbReference>
<dbReference type="HAMAP" id="MF_00682">
    <property type="entry name" value="HscB"/>
    <property type="match status" value="1"/>
</dbReference>
<dbReference type="InterPro" id="IPR001623">
    <property type="entry name" value="DnaJ_domain"/>
</dbReference>
<dbReference type="InterPro" id="IPR004640">
    <property type="entry name" value="HscB"/>
</dbReference>
<dbReference type="InterPro" id="IPR036386">
    <property type="entry name" value="HscB_C_sf"/>
</dbReference>
<dbReference type="InterPro" id="IPR009073">
    <property type="entry name" value="HscB_oligo_C"/>
</dbReference>
<dbReference type="InterPro" id="IPR036869">
    <property type="entry name" value="J_dom_sf"/>
</dbReference>
<dbReference type="NCBIfam" id="TIGR00714">
    <property type="entry name" value="hscB"/>
    <property type="match status" value="1"/>
</dbReference>
<dbReference type="PANTHER" id="PTHR14021">
    <property type="entry name" value="IRON-SULFUR CLUSTER CO-CHAPERONE PROTEIN HSCB"/>
    <property type="match status" value="1"/>
</dbReference>
<dbReference type="PANTHER" id="PTHR14021:SF15">
    <property type="entry name" value="IRON-SULFUR CLUSTER CO-CHAPERONE PROTEIN HSCB"/>
    <property type="match status" value="1"/>
</dbReference>
<dbReference type="Pfam" id="PF00226">
    <property type="entry name" value="DnaJ"/>
    <property type="match status" value="1"/>
</dbReference>
<dbReference type="Pfam" id="PF07743">
    <property type="entry name" value="HSCB_C"/>
    <property type="match status" value="1"/>
</dbReference>
<dbReference type="SMART" id="SM00271">
    <property type="entry name" value="DnaJ"/>
    <property type="match status" value="1"/>
</dbReference>
<dbReference type="SUPFAM" id="SSF46565">
    <property type="entry name" value="Chaperone J-domain"/>
    <property type="match status" value="1"/>
</dbReference>
<dbReference type="SUPFAM" id="SSF47144">
    <property type="entry name" value="HSC20 (HSCB), C-terminal oligomerisation domain"/>
    <property type="match status" value="1"/>
</dbReference>
<dbReference type="PROSITE" id="PS50076">
    <property type="entry name" value="DNAJ_2"/>
    <property type="match status" value="1"/>
</dbReference>
<accession>A8GMI9</accession>
<gene>
    <name evidence="1" type="primary">hscB</name>
    <name type="ordered locus">A1C_01480</name>
</gene>
<reference key="1">
    <citation type="submission" date="2007-09" db="EMBL/GenBank/DDBJ databases">
        <title>Complete genome sequence of Rickettsia akari.</title>
        <authorList>
            <person name="Madan A."/>
            <person name="Fahey J."/>
            <person name="Helton E."/>
            <person name="Ketteman M."/>
            <person name="Madan A."/>
            <person name="Rodrigues S."/>
            <person name="Sanchez A."/>
            <person name="Whiting M."/>
            <person name="Dasch G."/>
            <person name="Eremeeva M."/>
        </authorList>
    </citation>
    <scope>NUCLEOTIDE SEQUENCE [LARGE SCALE GENOMIC DNA]</scope>
    <source>
        <strain>Hartford</strain>
    </source>
</reference>
<evidence type="ECO:0000255" key="1">
    <source>
        <dbReference type="HAMAP-Rule" id="MF_00682"/>
    </source>
</evidence>
<name>HSCB_RICAH</name>
<comment type="function">
    <text evidence="1">Co-chaperone involved in the maturation of iron-sulfur cluster-containing proteins. Seems to help targeting proteins to be folded toward HscA.</text>
</comment>
<comment type="subunit">
    <text evidence="1">Interacts with HscA and stimulates its ATPase activity.</text>
</comment>
<comment type="similarity">
    <text evidence="1">Belongs to the HscB family.</text>
</comment>
<protein>
    <recommendedName>
        <fullName evidence="1">Co-chaperone protein HscB homolog</fullName>
    </recommendedName>
</protein>
<feature type="chain" id="PRO_1000083026" description="Co-chaperone protein HscB homolog">
    <location>
        <begin position="1"/>
        <end position="166"/>
    </location>
</feature>
<feature type="domain" description="J" evidence="1">
    <location>
        <begin position="3"/>
        <end position="73"/>
    </location>
</feature>
<keyword id="KW-0143">Chaperone</keyword>